<feature type="chain" id="PRO_0000080180" description="Probable sulfate transporter 3.4">
    <location>
        <begin position="1"/>
        <end position="653"/>
    </location>
</feature>
<feature type="topological domain" description="Cytoplasmic" evidence="2">
    <location>
        <begin position="1"/>
        <end position="92"/>
    </location>
</feature>
<feature type="transmembrane region" description="Helical" evidence="2">
    <location>
        <begin position="93"/>
        <end position="113"/>
    </location>
</feature>
<feature type="topological domain" description="Extracellular" evidence="2">
    <location>
        <begin position="114"/>
        <end position="115"/>
    </location>
</feature>
<feature type="transmembrane region" description="Helical" evidence="2">
    <location>
        <begin position="116"/>
        <end position="136"/>
    </location>
</feature>
<feature type="topological domain" description="Cytoplasmic" evidence="2">
    <location>
        <begin position="137"/>
        <end position="140"/>
    </location>
</feature>
<feature type="transmembrane region" description="Helical" evidence="2">
    <location>
        <begin position="141"/>
        <end position="161"/>
    </location>
</feature>
<feature type="topological domain" description="Extracellular" evidence="2">
    <location>
        <begin position="162"/>
        <end position="167"/>
    </location>
</feature>
<feature type="transmembrane region" description="Helical" evidence="2">
    <location>
        <begin position="168"/>
        <end position="188"/>
    </location>
</feature>
<feature type="topological domain" description="Cytoplasmic" evidence="2">
    <location>
        <begin position="189"/>
        <end position="194"/>
    </location>
</feature>
<feature type="transmembrane region" description="Helical" evidence="2">
    <location>
        <begin position="195"/>
        <end position="215"/>
    </location>
</feature>
<feature type="topological domain" description="Extracellular" evidence="2">
    <location>
        <begin position="216"/>
        <end position="247"/>
    </location>
</feature>
<feature type="transmembrane region" description="Helical" evidence="2">
    <location>
        <begin position="248"/>
        <end position="268"/>
    </location>
</feature>
<feature type="topological domain" description="Cytoplasmic" evidence="2">
    <location>
        <begin position="269"/>
        <end position="279"/>
    </location>
</feature>
<feature type="transmembrane region" description="Helical" evidence="2">
    <location>
        <begin position="280"/>
        <end position="300"/>
    </location>
</feature>
<feature type="topological domain" description="Extracellular" evidence="2">
    <location>
        <begin position="301"/>
        <end position="331"/>
    </location>
</feature>
<feature type="transmembrane region" description="Helical" evidence="2">
    <location>
        <begin position="332"/>
        <end position="352"/>
    </location>
</feature>
<feature type="topological domain" description="Cytoplasmic" evidence="2">
    <location>
        <begin position="353"/>
        <end position="370"/>
    </location>
</feature>
<feature type="transmembrane region" description="Helical" evidence="2">
    <location>
        <begin position="371"/>
        <end position="391"/>
    </location>
</feature>
<feature type="topological domain" description="Extracellular" evidence="2">
    <location>
        <begin position="392"/>
        <end position="407"/>
    </location>
</feature>
<feature type="transmembrane region" description="Helical" evidence="2">
    <location>
        <begin position="408"/>
        <end position="428"/>
    </location>
</feature>
<feature type="topological domain" description="Cytoplasmic" evidence="2">
    <location>
        <begin position="429"/>
        <end position="433"/>
    </location>
</feature>
<feature type="transmembrane region" description="Helical" evidence="2">
    <location>
        <begin position="434"/>
        <end position="454"/>
    </location>
</feature>
<feature type="topological domain" description="Extracellular" evidence="2">
    <location>
        <begin position="455"/>
        <end position="471"/>
    </location>
</feature>
<feature type="transmembrane region" description="Helical" evidence="2">
    <location>
        <begin position="472"/>
        <end position="492"/>
    </location>
</feature>
<feature type="topological domain" description="Cytoplasmic" evidence="2">
    <location>
        <begin position="493"/>
        <end position="653"/>
    </location>
</feature>
<feature type="domain" description="STAS" evidence="3">
    <location>
        <begin position="520"/>
        <end position="643"/>
    </location>
</feature>
<accession>Q9LW86</accession>
<proteinExistence type="evidence at transcript level"/>
<reference key="1">
    <citation type="submission" date="2001-01" db="EMBL/GenBank/DDBJ databases">
        <title>cDNA for sulfate transporter Sultr3;4.</title>
        <authorList>
            <person name="Takahashi H."/>
            <person name="Watanabe-Takahashi A."/>
            <person name="Saito K."/>
            <person name="Yamaya T."/>
        </authorList>
    </citation>
    <scope>NUCLEOTIDE SEQUENCE [MRNA]</scope>
</reference>
<reference key="2">
    <citation type="journal article" date="2000" name="DNA Res.">
        <title>Structural analysis of Arabidopsis thaliana chromosome 3. I. Sequence features of the regions of 4,504,864 bp covered by sixty P1 and TAC clones.</title>
        <authorList>
            <person name="Sato S."/>
            <person name="Nakamura Y."/>
            <person name="Kaneko T."/>
            <person name="Katoh T."/>
            <person name="Asamizu E."/>
            <person name="Tabata S."/>
        </authorList>
    </citation>
    <scope>NUCLEOTIDE SEQUENCE [LARGE SCALE GENOMIC DNA]</scope>
    <source>
        <strain>cv. Columbia</strain>
    </source>
</reference>
<reference key="3">
    <citation type="journal article" date="2017" name="Plant J.">
        <title>Araport11: a complete reannotation of the Arabidopsis thaliana reference genome.</title>
        <authorList>
            <person name="Cheng C.Y."/>
            <person name="Krishnakumar V."/>
            <person name="Chan A.P."/>
            <person name="Thibaud-Nissen F."/>
            <person name="Schobel S."/>
            <person name="Town C.D."/>
        </authorList>
    </citation>
    <scope>GENOME REANNOTATION</scope>
    <source>
        <strain>cv. Columbia</strain>
    </source>
</reference>
<comment type="function">
    <text evidence="1">H(+)/sulfate cotransporter that may play a role in the regulation of sulfate assimilation.</text>
</comment>
<comment type="subcellular location">
    <subcellularLocation>
        <location evidence="4">Membrane</location>
        <topology evidence="4">Multi-pass membrane protein</topology>
    </subcellularLocation>
</comment>
<comment type="similarity">
    <text evidence="4">Belongs to the SLC26A/SulP transporter (TC 2.A.53) family.</text>
</comment>
<evidence type="ECO:0000250" key="1"/>
<evidence type="ECO:0000255" key="2"/>
<evidence type="ECO:0000255" key="3">
    <source>
        <dbReference type="PROSITE-ProRule" id="PRU00198"/>
    </source>
</evidence>
<evidence type="ECO:0000305" key="4"/>
<keyword id="KW-0472">Membrane</keyword>
<keyword id="KW-1185">Reference proteome</keyword>
<keyword id="KW-0764">Sulfate transport</keyword>
<keyword id="KW-0769">Symport</keyword>
<keyword id="KW-0812">Transmembrane</keyword>
<keyword id="KW-1133">Transmembrane helix</keyword>
<keyword id="KW-0813">Transport</keyword>
<organism>
    <name type="scientific">Arabidopsis thaliana</name>
    <name type="common">Mouse-ear cress</name>
    <dbReference type="NCBI Taxonomy" id="3702"/>
    <lineage>
        <taxon>Eukaryota</taxon>
        <taxon>Viridiplantae</taxon>
        <taxon>Streptophyta</taxon>
        <taxon>Embryophyta</taxon>
        <taxon>Tracheophyta</taxon>
        <taxon>Spermatophyta</taxon>
        <taxon>Magnoliopsida</taxon>
        <taxon>eudicotyledons</taxon>
        <taxon>Gunneridae</taxon>
        <taxon>Pentapetalae</taxon>
        <taxon>rosids</taxon>
        <taxon>malvids</taxon>
        <taxon>Brassicales</taxon>
        <taxon>Brassicaceae</taxon>
        <taxon>Camelineae</taxon>
        <taxon>Arabidopsis</taxon>
    </lineage>
</organism>
<protein>
    <recommendedName>
        <fullName>Probable sulfate transporter 3.4</fullName>
    </recommendedName>
</protein>
<sequence>MGHGTNRVEDMASPNNGTAGETVVEIHSVCLPPKKTAFQKLKKRVGDVFFPDDPLQRFRNQTWRNRVILGLQSLFPIFTWGSQYDLKLLRSDVISGLTIASLAIPQGISYAKLANLPPIVGLYSSFVPPLIYAVLGSSRHLAVGPVSIASLVMGSMLSESVSPTQDSILYLKLAFTSTFFAGVFQASLGLLRLGFMIDFLSKATLIGFTAGAAVIVSLQQLKGLLGIVHFTGKMQIVPVMSSVFNHRSEWSWETIVMGIGFLSILLTTRHISMRKPKLFWISAASPLASVIISTLLVYLIRSKTHAISFIGHLPKGLNPPSLNMLYFSGAHLALAIKTGIITGILSLTEGIAVGRTFASLKNYQVNGNKEMMAIGFMNMAGSCTSCYVTTGSFSRSAVNYNAGAKTAVSNIVMASAVLVTLLFLMPLFYYTPNVILAAIILTAVIGLIDYQAAYKLWKVDKFDFFTCLCSFFGVLFVSVPLGLAIAVAVSVIKILLHVTRPNTSEFGNIPGTQIYQSLGRYREASRIPGFLILAIESPIYFANSTYLQDRILRWAREEENRIKENNGTTLKCIILDMTAVSAIDTSGLEAVFELRRRLEKQSLQLVLVNPVGTVMEKLHKSKIIEALGLSGLYLTVGEAVADLSSTWKANGQP</sequence>
<gene>
    <name type="primary">SULTR3;4</name>
    <name type="ordered locus">At3g15990</name>
    <name type="ORF">MSL1.3</name>
</gene>
<name>SUT34_ARATH</name>
<dbReference type="EMBL" id="AB054645">
    <property type="protein sequence ID" value="BAB21264.1"/>
    <property type="molecule type" value="mRNA"/>
</dbReference>
<dbReference type="EMBL" id="AB012247">
    <property type="protein sequence ID" value="BAB02665.1"/>
    <property type="molecule type" value="Genomic_DNA"/>
</dbReference>
<dbReference type="EMBL" id="CP002686">
    <property type="protein sequence ID" value="AEE75760.1"/>
    <property type="molecule type" value="Genomic_DNA"/>
</dbReference>
<dbReference type="RefSeq" id="NP_188220.1">
    <property type="nucleotide sequence ID" value="NM_112469.3"/>
</dbReference>
<dbReference type="SMR" id="Q9LW86"/>
<dbReference type="FunCoup" id="Q9LW86">
    <property type="interactions" value="599"/>
</dbReference>
<dbReference type="STRING" id="3702.Q9LW86"/>
<dbReference type="PaxDb" id="3702-AT3G15990.1"/>
<dbReference type="ProteomicsDB" id="226757"/>
<dbReference type="EnsemblPlants" id="AT3G15990.1">
    <property type="protein sequence ID" value="AT3G15990.1"/>
    <property type="gene ID" value="AT3G15990"/>
</dbReference>
<dbReference type="GeneID" id="820844"/>
<dbReference type="Gramene" id="AT3G15990.1">
    <property type="protein sequence ID" value="AT3G15990.1"/>
    <property type="gene ID" value="AT3G15990"/>
</dbReference>
<dbReference type="KEGG" id="ath:AT3G15990"/>
<dbReference type="Araport" id="AT3G15990"/>
<dbReference type="TAIR" id="AT3G15990">
    <property type="gene designation" value="SULTR3"/>
</dbReference>
<dbReference type="eggNOG" id="KOG0236">
    <property type="taxonomic scope" value="Eukaryota"/>
</dbReference>
<dbReference type="HOGENOM" id="CLU_003182_13_2_1"/>
<dbReference type="InParanoid" id="Q9LW86"/>
<dbReference type="OMA" id="WNENQDL"/>
<dbReference type="PhylomeDB" id="Q9LW86"/>
<dbReference type="PRO" id="PR:Q9LW86"/>
<dbReference type="Proteomes" id="UP000006548">
    <property type="component" value="Chromosome 3"/>
</dbReference>
<dbReference type="ExpressionAtlas" id="Q9LW86">
    <property type="expression patterns" value="baseline and differential"/>
</dbReference>
<dbReference type="GO" id="GO:0005886">
    <property type="term" value="C:plasma membrane"/>
    <property type="evidence" value="ECO:0000314"/>
    <property type="project" value="TAIR"/>
</dbReference>
<dbReference type="GO" id="GO:0009506">
    <property type="term" value="C:plasmodesma"/>
    <property type="evidence" value="ECO:0007005"/>
    <property type="project" value="TAIR"/>
</dbReference>
<dbReference type="GO" id="GO:0008271">
    <property type="term" value="F:secondary active sulfate transmembrane transporter activity"/>
    <property type="evidence" value="ECO:0007669"/>
    <property type="project" value="InterPro"/>
</dbReference>
<dbReference type="GO" id="GO:0015293">
    <property type="term" value="F:symporter activity"/>
    <property type="evidence" value="ECO:0007669"/>
    <property type="project" value="UniProtKB-KW"/>
</dbReference>
<dbReference type="GO" id="GO:0006817">
    <property type="term" value="P:phosphate ion transport"/>
    <property type="evidence" value="ECO:0000314"/>
    <property type="project" value="TAIR"/>
</dbReference>
<dbReference type="CDD" id="cd07042">
    <property type="entry name" value="STAS_SulP_like_sulfate_transporter"/>
    <property type="match status" value="1"/>
</dbReference>
<dbReference type="FunFam" id="3.30.750.24:FF:000002">
    <property type="entry name" value="Sulfate transporter 31"/>
    <property type="match status" value="1"/>
</dbReference>
<dbReference type="Gene3D" id="3.30.750.24">
    <property type="entry name" value="STAS domain"/>
    <property type="match status" value="1"/>
</dbReference>
<dbReference type="InterPro" id="IPR018045">
    <property type="entry name" value="S04_transporter_CS"/>
</dbReference>
<dbReference type="InterPro" id="IPR011547">
    <property type="entry name" value="SLC26A/SulP_dom"/>
</dbReference>
<dbReference type="InterPro" id="IPR001902">
    <property type="entry name" value="SLC26A/SulP_fam"/>
</dbReference>
<dbReference type="InterPro" id="IPR002645">
    <property type="entry name" value="STAS_dom"/>
</dbReference>
<dbReference type="InterPro" id="IPR036513">
    <property type="entry name" value="STAS_dom_sf"/>
</dbReference>
<dbReference type="NCBIfam" id="TIGR00815">
    <property type="entry name" value="sulP"/>
    <property type="match status" value="1"/>
</dbReference>
<dbReference type="PANTHER" id="PTHR11814">
    <property type="entry name" value="SULFATE TRANSPORTER"/>
    <property type="match status" value="1"/>
</dbReference>
<dbReference type="Pfam" id="PF01740">
    <property type="entry name" value="STAS"/>
    <property type="match status" value="1"/>
</dbReference>
<dbReference type="Pfam" id="PF00916">
    <property type="entry name" value="Sulfate_transp"/>
    <property type="match status" value="1"/>
</dbReference>
<dbReference type="SUPFAM" id="SSF52091">
    <property type="entry name" value="SpoIIaa-like"/>
    <property type="match status" value="1"/>
</dbReference>
<dbReference type="PROSITE" id="PS01130">
    <property type="entry name" value="SLC26A"/>
    <property type="match status" value="1"/>
</dbReference>
<dbReference type="PROSITE" id="PS50801">
    <property type="entry name" value="STAS"/>
    <property type="match status" value="1"/>
</dbReference>